<organism>
    <name type="scientific">Escherichia coli O7:K1 (strain IAI39 / ExPEC)</name>
    <dbReference type="NCBI Taxonomy" id="585057"/>
    <lineage>
        <taxon>Bacteria</taxon>
        <taxon>Pseudomonadati</taxon>
        <taxon>Pseudomonadota</taxon>
        <taxon>Gammaproteobacteria</taxon>
        <taxon>Enterobacterales</taxon>
        <taxon>Enterobacteriaceae</taxon>
        <taxon>Escherichia</taxon>
    </lineage>
</organism>
<reference key="1">
    <citation type="journal article" date="2009" name="PLoS Genet.">
        <title>Organised genome dynamics in the Escherichia coli species results in highly diverse adaptive paths.</title>
        <authorList>
            <person name="Touchon M."/>
            <person name="Hoede C."/>
            <person name="Tenaillon O."/>
            <person name="Barbe V."/>
            <person name="Baeriswyl S."/>
            <person name="Bidet P."/>
            <person name="Bingen E."/>
            <person name="Bonacorsi S."/>
            <person name="Bouchier C."/>
            <person name="Bouvet O."/>
            <person name="Calteau A."/>
            <person name="Chiapello H."/>
            <person name="Clermont O."/>
            <person name="Cruveiller S."/>
            <person name="Danchin A."/>
            <person name="Diard M."/>
            <person name="Dossat C."/>
            <person name="Karoui M.E."/>
            <person name="Frapy E."/>
            <person name="Garry L."/>
            <person name="Ghigo J.M."/>
            <person name="Gilles A.M."/>
            <person name="Johnson J."/>
            <person name="Le Bouguenec C."/>
            <person name="Lescat M."/>
            <person name="Mangenot S."/>
            <person name="Martinez-Jehanne V."/>
            <person name="Matic I."/>
            <person name="Nassif X."/>
            <person name="Oztas S."/>
            <person name="Petit M.A."/>
            <person name="Pichon C."/>
            <person name="Rouy Z."/>
            <person name="Ruf C.S."/>
            <person name="Schneider D."/>
            <person name="Tourret J."/>
            <person name="Vacherie B."/>
            <person name="Vallenet D."/>
            <person name="Medigue C."/>
            <person name="Rocha E.P.C."/>
            <person name="Denamur E."/>
        </authorList>
    </citation>
    <scope>NUCLEOTIDE SEQUENCE [LARGE SCALE GENOMIC DNA]</scope>
    <source>
        <strain>IAI39 / ExPEC</strain>
    </source>
</reference>
<dbReference type="EMBL" id="CU928164">
    <property type="protein sequence ID" value="CAR19950.1"/>
    <property type="molecule type" value="Genomic_DNA"/>
</dbReference>
<dbReference type="RefSeq" id="WP_000907085.1">
    <property type="nucleotide sequence ID" value="NC_011750.1"/>
</dbReference>
<dbReference type="RefSeq" id="YP_002409731.1">
    <property type="nucleotide sequence ID" value="NC_011750.1"/>
</dbReference>
<dbReference type="SMR" id="B7NMC2"/>
<dbReference type="STRING" id="585057.ECIAI39_3837"/>
<dbReference type="KEGG" id="ect:ECIAI39_3837"/>
<dbReference type="PATRIC" id="fig|585057.6.peg.3973"/>
<dbReference type="HOGENOM" id="CLU_186759_1_0_6"/>
<dbReference type="Proteomes" id="UP000000749">
    <property type="component" value="Chromosome"/>
</dbReference>
<dbReference type="Gene3D" id="1.10.10.610">
    <property type="entry name" value="YehU-like"/>
    <property type="match status" value="1"/>
</dbReference>
<dbReference type="HAMAP" id="MF_00690">
    <property type="entry name" value="UPF0270"/>
    <property type="match status" value="1"/>
</dbReference>
<dbReference type="InterPro" id="IPR010648">
    <property type="entry name" value="UPF0270"/>
</dbReference>
<dbReference type="InterPro" id="IPR036685">
    <property type="entry name" value="YehU-like_sf"/>
</dbReference>
<dbReference type="NCBIfam" id="NF003438">
    <property type="entry name" value="PRK04966.1"/>
    <property type="match status" value="1"/>
</dbReference>
<dbReference type="Pfam" id="PF06794">
    <property type="entry name" value="UPF0270"/>
    <property type="match status" value="1"/>
</dbReference>
<dbReference type="PIRSF" id="PIRSF006169">
    <property type="entry name" value="UCP006169"/>
    <property type="match status" value="1"/>
</dbReference>
<dbReference type="SUPFAM" id="SSF118001">
    <property type="entry name" value="YehU-like"/>
    <property type="match status" value="1"/>
</dbReference>
<protein>
    <recommendedName>
        <fullName evidence="1">UPF0270 protein YheU</fullName>
    </recommendedName>
</protein>
<sequence>MLIPWQDLSPETLENLIESFVLREGTDYGEHERTLEQKVADVKRQLQCGEAVLVWSELHETVNIMPRSQFRE</sequence>
<name>YHEU_ECO7I</name>
<comment type="similarity">
    <text evidence="1">Belongs to the UPF0270 family.</text>
</comment>
<accession>B7NMC2</accession>
<gene>
    <name evidence="1" type="primary">yheU</name>
    <name type="ordered locus">ECIAI39_3837</name>
</gene>
<feature type="chain" id="PRO_1000132008" description="UPF0270 protein YheU">
    <location>
        <begin position="1"/>
        <end position="72"/>
    </location>
</feature>
<evidence type="ECO:0000255" key="1">
    <source>
        <dbReference type="HAMAP-Rule" id="MF_00690"/>
    </source>
</evidence>
<proteinExistence type="inferred from homology"/>